<reference key="1">
    <citation type="submission" date="2006-08" db="EMBL/GenBank/DDBJ databases">
        <title>Complete sequence of Shewanella sp. MR-4.</title>
        <authorList>
            <consortium name="US DOE Joint Genome Institute"/>
            <person name="Copeland A."/>
            <person name="Lucas S."/>
            <person name="Lapidus A."/>
            <person name="Barry K."/>
            <person name="Detter J.C."/>
            <person name="Glavina del Rio T."/>
            <person name="Hammon N."/>
            <person name="Israni S."/>
            <person name="Dalin E."/>
            <person name="Tice H."/>
            <person name="Pitluck S."/>
            <person name="Kiss H."/>
            <person name="Brettin T."/>
            <person name="Bruce D."/>
            <person name="Han C."/>
            <person name="Tapia R."/>
            <person name="Gilna P."/>
            <person name="Schmutz J."/>
            <person name="Larimer F."/>
            <person name="Land M."/>
            <person name="Hauser L."/>
            <person name="Kyrpides N."/>
            <person name="Mikhailova N."/>
            <person name="Nealson K."/>
            <person name="Konstantinidis K."/>
            <person name="Klappenbach J."/>
            <person name="Tiedje J."/>
            <person name="Richardson P."/>
        </authorList>
    </citation>
    <scope>NUCLEOTIDE SEQUENCE [LARGE SCALE GENOMIC DNA]</scope>
    <source>
        <strain>MR-4</strain>
    </source>
</reference>
<proteinExistence type="inferred from homology"/>
<evidence type="ECO:0000255" key="1">
    <source>
        <dbReference type="HAMAP-Rule" id="MF_01445"/>
    </source>
</evidence>
<dbReference type="EC" id="2.3.1.234" evidence="1"/>
<dbReference type="EMBL" id="CP000446">
    <property type="protein sequence ID" value="ABI39975.1"/>
    <property type="molecule type" value="Genomic_DNA"/>
</dbReference>
<dbReference type="RefSeq" id="WP_011623654.1">
    <property type="nucleotide sequence ID" value="NC_008321.1"/>
</dbReference>
<dbReference type="SMR" id="Q0HG42"/>
<dbReference type="GeneID" id="94729003"/>
<dbReference type="KEGG" id="she:Shewmr4_2904"/>
<dbReference type="HOGENOM" id="CLU_023208_0_0_6"/>
<dbReference type="GO" id="GO:0005737">
    <property type="term" value="C:cytoplasm"/>
    <property type="evidence" value="ECO:0007669"/>
    <property type="project" value="UniProtKB-SubCell"/>
</dbReference>
<dbReference type="GO" id="GO:0005506">
    <property type="term" value="F:iron ion binding"/>
    <property type="evidence" value="ECO:0007669"/>
    <property type="project" value="UniProtKB-UniRule"/>
</dbReference>
<dbReference type="GO" id="GO:0061711">
    <property type="term" value="F:N(6)-L-threonylcarbamoyladenine synthase activity"/>
    <property type="evidence" value="ECO:0007669"/>
    <property type="project" value="UniProtKB-EC"/>
</dbReference>
<dbReference type="GO" id="GO:0002949">
    <property type="term" value="P:tRNA threonylcarbamoyladenosine modification"/>
    <property type="evidence" value="ECO:0007669"/>
    <property type="project" value="UniProtKB-UniRule"/>
</dbReference>
<dbReference type="CDD" id="cd24133">
    <property type="entry name" value="ASKHA_NBD_TsaD_bac"/>
    <property type="match status" value="1"/>
</dbReference>
<dbReference type="FunFam" id="3.30.420.40:FF:000031">
    <property type="entry name" value="tRNA N6-adenosine threonylcarbamoyltransferase"/>
    <property type="match status" value="1"/>
</dbReference>
<dbReference type="Gene3D" id="3.30.420.40">
    <property type="match status" value="2"/>
</dbReference>
<dbReference type="HAMAP" id="MF_01445">
    <property type="entry name" value="TsaD"/>
    <property type="match status" value="1"/>
</dbReference>
<dbReference type="InterPro" id="IPR043129">
    <property type="entry name" value="ATPase_NBD"/>
</dbReference>
<dbReference type="InterPro" id="IPR000905">
    <property type="entry name" value="Gcp-like_dom"/>
</dbReference>
<dbReference type="InterPro" id="IPR017861">
    <property type="entry name" value="KAE1/TsaD"/>
</dbReference>
<dbReference type="InterPro" id="IPR017860">
    <property type="entry name" value="Peptidase_M22_CS"/>
</dbReference>
<dbReference type="InterPro" id="IPR022450">
    <property type="entry name" value="TsaD"/>
</dbReference>
<dbReference type="NCBIfam" id="TIGR00329">
    <property type="entry name" value="gcp_kae1"/>
    <property type="match status" value="1"/>
</dbReference>
<dbReference type="NCBIfam" id="TIGR03723">
    <property type="entry name" value="T6A_TsaD_YgjD"/>
    <property type="match status" value="1"/>
</dbReference>
<dbReference type="PANTHER" id="PTHR11735">
    <property type="entry name" value="TRNA N6-ADENOSINE THREONYLCARBAMOYLTRANSFERASE"/>
    <property type="match status" value="1"/>
</dbReference>
<dbReference type="PANTHER" id="PTHR11735:SF6">
    <property type="entry name" value="TRNA N6-ADENOSINE THREONYLCARBAMOYLTRANSFERASE, MITOCHONDRIAL"/>
    <property type="match status" value="1"/>
</dbReference>
<dbReference type="Pfam" id="PF00814">
    <property type="entry name" value="TsaD"/>
    <property type="match status" value="1"/>
</dbReference>
<dbReference type="PRINTS" id="PR00789">
    <property type="entry name" value="OSIALOPTASE"/>
</dbReference>
<dbReference type="SUPFAM" id="SSF53067">
    <property type="entry name" value="Actin-like ATPase domain"/>
    <property type="match status" value="2"/>
</dbReference>
<dbReference type="PROSITE" id="PS01016">
    <property type="entry name" value="GLYCOPROTEASE"/>
    <property type="match status" value="1"/>
</dbReference>
<name>TSAD_SHESM</name>
<gene>
    <name evidence="1" type="primary">tsaD</name>
    <name type="synonym">gcp</name>
    <name type="ordered locus">Shewmr4_2904</name>
</gene>
<comment type="function">
    <text evidence="1">Required for the formation of a threonylcarbamoyl group on adenosine at position 37 (t(6)A37) in tRNAs that read codons beginning with adenine. Is involved in the transfer of the threonylcarbamoyl moiety of threonylcarbamoyl-AMP (TC-AMP) to the N6 group of A37, together with TsaE and TsaB. TsaD likely plays a direct catalytic role in this reaction.</text>
</comment>
<comment type="catalytic activity">
    <reaction evidence="1">
        <text>L-threonylcarbamoyladenylate + adenosine(37) in tRNA = N(6)-L-threonylcarbamoyladenosine(37) in tRNA + AMP + H(+)</text>
        <dbReference type="Rhea" id="RHEA:37059"/>
        <dbReference type="Rhea" id="RHEA-COMP:10162"/>
        <dbReference type="Rhea" id="RHEA-COMP:10163"/>
        <dbReference type="ChEBI" id="CHEBI:15378"/>
        <dbReference type="ChEBI" id="CHEBI:73682"/>
        <dbReference type="ChEBI" id="CHEBI:74411"/>
        <dbReference type="ChEBI" id="CHEBI:74418"/>
        <dbReference type="ChEBI" id="CHEBI:456215"/>
        <dbReference type="EC" id="2.3.1.234"/>
    </reaction>
</comment>
<comment type="cofactor">
    <cofactor evidence="1">
        <name>Fe(2+)</name>
        <dbReference type="ChEBI" id="CHEBI:29033"/>
    </cofactor>
    <text evidence="1">Binds 1 Fe(2+) ion per subunit.</text>
</comment>
<comment type="subcellular location">
    <subcellularLocation>
        <location evidence="1">Cytoplasm</location>
    </subcellularLocation>
</comment>
<comment type="similarity">
    <text evidence="1">Belongs to the KAE1 / TsaD family.</text>
</comment>
<accession>Q0HG42</accession>
<organism>
    <name type="scientific">Shewanella sp. (strain MR-4)</name>
    <dbReference type="NCBI Taxonomy" id="60480"/>
    <lineage>
        <taxon>Bacteria</taxon>
        <taxon>Pseudomonadati</taxon>
        <taxon>Pseudomonadota</taxon>
        <taxon>Gammaproteobacteria</taxon>
        <taxon>Alteromonadales</taxon>
        <taxon>Shewanellaceae</taxon>
        <taxon>Shewanella</taxon>
    </lineage>
</organism>
<protein>
    <recommendedName>
        <fullName evidence="1">tRNA N6-adenosine threonylcarbamoyltransferase</fullName>
        <ecNumber evidence="1">2.3.1.234</ecNumber>
    </recommendedName>
    <alternativeName>
        <fullName evidence="1">N6-L-threonylcarbamoyladenine synthase</fullName>
        <shortName evidence="1">t(6)A synthase</shortName>
    </alternativeName>
    <alternativeName>
        <fullName evidence="1">t(6)A37 threonylcarbamoyladenosine biosynthesis protein TsaD</fullName>
    </alternativeName>
    <alternativeName>
        <fullName evidence="1">tRNA threonylcarbamoyladenosine biosynthesis protein TsaD</fullName>
    </alternativeName>
</protein>
<sequence length="338" mass="36190">MRVLGIETSCDETGIAVYDDKLGLLSHALYSQVKLHADYGGVVPELASRDHVRKIVPLIRQALKNANTEIADLDGIAYTKGPGLIGALLVGACVGRSLAFAWNKPAIGVHHMEGHLLAPMLEDDAPEFPFVALLVSGGHSMLVKVDGIGLYEVLGESVDDAAGEAFDKTAKLMGLDYPGGPRLAKLAAKGEPAGYQFPRPMTDRPGLDFSFSGLKTFTANTIAAEPDDEQTRANIARAFEEAVVDTLAIKCRRALKQTGYNRLVIAGGVSANTRLRETLAEMMTSIGGRVYYPRGEFCTDNGAMIAFAGLQRLKAGQQEDLAVKGQPRWPLDTLPPVA</sequence>
<keyword id="KW-0012">Acyltransferase</keyword>
<keyword id="KW-0963">Cytoplasm</keyword>
<keyword id="KW-0408">Iron</keyword>
<keyword id="KW-0479">Metal-binding</keyword>
<keyword id="KW-0808">Transferase</keyword>
<keyword id="KW-0819">tRNA processing</keyword>
<feature type="chain" id="PRO_0000303536" description="tRNA N6-adenosine threonylcarbamoyltransferase">
    <location>
        <begin position="1"/>
        <end position="338"/>
    </location>
</feature>
<feature type="binding site" evidence="1">
    <location>
        <position position="111"/>
    </location>
    <ligand>
        <name>Fe cation</name>
        <dbReference type="ChEBI" id="CHEBI:24875"/>
    </ligand>
</feature>
<feature type="binding site" evidence="1">
    <location>
        <position position="115"/>
    </location>
    <ligand>
        <name>Fe cation</name>
        <dbReference type="ChEBI" id="CHEBI:24875"/>
    </ligand>
</feature>
<feature type="binding site" evidence="1">
    <location>
        <begin position="134"/>
        <end position="138"/>
    </location>
    <ligand>
        <name>substrate</name>
    </ligand>
</feature>
<feature type="binding site" evidence="1">
    <location>
        <position position="167"/>
    </location>
    <ligand>
        <name>substrate</name>
    </ligand>
</feature>
<feature type="binding site" evidence="1">
    <location>
        <position position="180"/>
    </location>
    <ligand>
        <name>substrate</name>
    </ligand>
</feature>
<feature type="binding site" evidence="1">
    <location>
        <position position="272"/>
    </location>
    <ligand>
        <name>substrate</name>
    </ligand>
</feature>
<feature type="binding site" evidence="1">
    <location>
        <position position="300"/>
    </location>
    <ligand>
        <name>Fe cation</name>
        <dbReference type="ChEBI" id="CHEBI:24875"/>
    </ligand>
</feature>